<evidence type="ECO:0000255" key="1">
    <source>
        <dbReference type="HAMAP-Rule" id="MF_01862"/>
    </source>
</evidence>
<gene>
    <name evidence="1" type="primary">rsmC</name>
    <name type="ordered locus">SFV_4405</name>
</gene>
<proteinExistence type="inferred from homology"/>
<accession>Q0SX40</accession>
<reference key="1">
    <citation type="journal article" date="2006" name="BMC Genomics">
        <title>Complete genome sequence of Shigella flexneri 5b and comparison with Shigella flexneri 2a.</title>
        <authorList>
            <person name="Nie H."/>
            <person name="Yang F."/>
            <person name="Zhang X."/>
            <person name="Yang J."/>
            <person name="Chen L."/>
            <person name="Wang J."/>
            <person name="Xiong Z."/>
            <person name="Peng J."/>
            <person name="Sun L."/>
            <person name="Dong J."/>
            <person name="Xue Y."/>
            <person name="Xu X."/>
            <person name="Chen S."/>
            <person name="Yao Z."/>
            <person name="Shen Y."/>
            <person name="Jin Q."/>
        </authorList>
    </citation>
    <scope>NUCLEOTIDE SEQUENCE [LARGE SCALE GENOMIC DNA]</scope>
    <source>
        <strain>8401</strain>
    </source>
</reference>
<protein>
    <recommendedName>
        <fullName evidence="1">Ribosomal RNA small subunit methyltransferase C</fullName>
        <ecNumber evidence="1">2.1.1.172</ecNumber>
    </recommendedName>
    <alternativeName>
        <fullName evidence="1">16S rRNA m2G1207 methyltransferase</fullName>
    </alternativeName>
    <alternativeName>
        <fullName evidence="1">rRNA (guanine-N(2)-)-methyltransferase RsmC</fullName>
    </alternativeName>
</protein>
<keyword id="KW-0963">Cytoplasm</keyword>
<keyword id="KW-0489">Methyltransferase</keyword>
<keyword id="KW-0698">rRNA processing</keyword>
<keyword id="KW-0949">S-adenosyl-L-methionine</keyword>
<keyword id="KW-0808">Transferase</keyword>
<organism>
    <name type="scientific">Shigella flexneri serotype 5b (strain 8401)</name>
    <dbReference type="NCBI Taxonomy" id="373384"/>
    <lineage>
        <taxon>Bacteria</taxon>
        <taxon>Pseudomonadati</taxon>
        <taxon>Pseudomonadota</taxon>
        <taxon>Gammaproteobacteria</taxon>
        <taxon>Enterobacterales</taxon>
        <taxon>Enterobacteriaceae</taxon>
        <taxon>Shigella</taxon>
    </lineage>
</organism>
<dbReference type="EC" id="2.1.1.172" evidence="1"/>
<dbReference type="EMBL" id="CP000266">
    <property type="protein sequence ID" value="ABF06375.1"/>
    <property type="molecule type" value="Genomic_DNA"/>
</dbReference>
<dbReference type="RefSeq" id="WP_001272361.1">
    <property type="nucleotide sequence ID" value="NC_008258.1"/>
</dbReference>
<dbReference type="SMR" id="Q0SX40"/>
<dbReference type="KEGG" id="sfv:SFV_4405"/>
<dbReference type="HOGENOM" id="CLU_049581_0_1_6"/>
<dbReference type="Proteomes" id="UP000000659">
    <property type="component" value="Chromosome"/>
</dbReference>
<dbReference type="GO" id="GO:0005737">
    <property type="term" value="C:cytoplasm"/>
    <property type="evidence" value="ECO:0007669"/>
    <property type="project" value="UniProtKB-SubCell"/>
</dbReference>
<dbReference type="GO" id="GO:0052914">
    <property type="term" value="F:16S rRNA (guanine(1207)-N(2))-methyltransferase activity"/>
    <property type="evidence" value="ECO:0007669"/>
    <property type="project" value="UniProtKB-EC"/>
</dbReference>
<dbReference type="GO" id="GO:0003676">
    <property type="term" value="F:nucleic acid binding"/>
    <property type="evidence" value="ECO:0007669"/>
    <property type="project" value="InterPro"/>
</dbReference>
<dbReference type="CDD" id="cd02440">
    <property type="entry name" value="AdoMet_MTases"/>
    <property type="match status" value="1"/>
</dbReference>
<dbReference type="FunFam" id="3.40.50.150:FF:000058">
    <property type="entry name" value="Ribosomal RNA small subunit methyltransferase C"/>
    <property type="match status" value="1"/>
</dbReference>
<dbReference type="FunFam" id="3.40.50.150:FF:000063">
    <property type="entry name" value="Ribosomal RNA small subunit methyltransferase C"/>
    <property type="match status" value="1"/>
</dbReference>
<dbReference type="Gene3D" id="3.40.50.150">
    <property type="entry name" value="Vaccinia Virus protein VP39"/>
    <property type="match status" value="2"/>
</dbReference>
<dbReference type="HAMAP" id="MF_01862">
    <property type="entry name" value="16SrRNA_methyltr_C"/>
    <property type="match status" value="1"/>
</dbReference>
<dbReference type="InterPro" id="IPR002052">
    <property type="entry name" value="DNA_methylase_N6_adenine_CS"/>
</dbReference>
<dbReference type="InterPro" id="IPR013675">
    <property type="entry name" value="Mtase_sm_N"/>
</dbReference>
<dbReference type="InterPro" id="IPR023543">
    <property type="entry name" value="rRNA_ssu_MeTfrase_C"/>
</dbReference>
<dbReference type="InterPro" id="IPR046977">
    <property type="entry name" value="RsmC/RlmG"/>
</dbReference>
<dbReference type="InterPro" id="IPR029063">
    <property type="entry name" value="SAM-dependent_MTases_sf"/>
</dbReference>
<dbReference type="InterPro" id="IPR007848">
    <property type="entry name" value="Small_mtfrase_dom"/>
</dbReference>
<dbReference type="NCBIfam" id="NF007023">
    <property type="entry name" value="PRK09489.1"/>
    <property type="match status" value="1"/>
</dbReference>
<dbReference type="PANTHER" id="PTHR47816">
    <property type="entry name" value="RIBOSOMAL RNA SMALL SUBUNIT METHYLTRANSFERASE C"/>
    <property type="match status" value="1"/>
</dbReference>
<dbReference type="PANTHER" id="PTHR47816:SF4">
    <property type="entry name" value="RIBOSOMAL RNA SMALL SUBUNIT METHYLTRANSFERASE C"/>
    <property type="match status" value="1"/>
</dbReference>
<dbReference type="Pfam" id="PF05175">
    <property type="entry name" value="MTS"/>
    <property type="match status" value="1"/>
</dbReference>
<dbReference type="Pfam" id="PF08468">
    <property type="entry name" value="MTS_N"/>
    <property type="match status" value="1"/>
</dbReference>
<dbReference type="SUPFAM" id="SSF53335">
    <property type="entry name" value="S-adenosyl-L-methionine-dependent methyltransferases"/>
    <property type="match status" value="1"/>
</dbReference>
<sequence length="343" mass="37500">MSAFTPASEVLLRHSDDLEQSRILFAGDLQDDLPARLDTAASRAHTQQFHHWQVLSCQMGDNARFSLVATANDVADCDTLIYYWPKNKPEAQFQLMNLLSLLPVGTDIFVVGENRSGVRSAEQMLADYAPLNKVDSARRCGLYFGRLEKQPVFDADKFWGEYSVDGLTVKTLPGVFSRDGLDVGSQLLLSTLTPHTKGKVLDVGCGAGVLSVAFARHSPKIRLTLCDVSAPAVEASRATLAANGVESEVFASNVFSEVKGCFDMIISNPPFHDGMQTSLDAAQTLIRGAVRHLNSGGELRIVANAFLPYPDVLDETFGFHEVIAQTGRFKVYRAIMTRQAKKG</sequence>
<comment type="function">
    <text evidence="1">Specifically methylates the guanine in position 1207 of 16S rRNA in the 30S particle.</text>
</comment>
<comment type="catalytic activity">
    <reaction evidence="1">
        <text>guanosine(1207) in 16S rRNA + S-adenosyl-L-methionine = N(2)-methylguanosine(1207) in 16S rRNA + S-adenosyl-L-homocysteine + H(+)</text>
        <dbReference type="Rhea" id="RHEA:42736"/>
        <dbReference type="Rhea" id="RHEA-COMP:10213"/>
        <dbReference type="Rhea" id="RHEA-COMP:10214"/>
        <dbReference type="ChEBI" id="CHEBI:15378"/>
        <dbReference type="ChEBI" id="CHEBI:57856"/>
        <dbReference type="ChEBI" id="CHEBI:59789"/>
        <dbReference type="ChEBI" id="CHEBI:74269"/>
        <dbReference type="ChEBI" id="CHEBI:74481"/>
        <dbReference type="EC" id="2.1.1.172"/>
    </reaction>
</comment>
<comment type="subunit">
    <text evidence="1">Monomer.</text>
</comment>
<comment type="subcellular location">
    <subcellularLocation>
        <location evidence="1">Cytoplasm</location>
    </subcellularLocation>
</comment>
<comment type="similarity">
    <text evidence="1">Belongs to the methyltransferase superfamily. RsmC family.</text>
</comment>
<name>RSMC_SHIF8</name>
<feature type="chain" id="PRO_0000369788" description="Ribosomal RNA small subunit methyltransferase C">
    <location>
        <begin position="1"/>
        <end position="343"/>
    </location>
</feature>